<protein>
    <recommendedName>
        <fullName evidence="1">Glutamyl-tRNA reductase</fullName>
        <shortName evidence="1">GluTR</shortName>
        <ecNumber evidence="1">1.2.1.70</ecNumber>
    </recommendedName>
</protein>
<gene>
    <name evidence="1" type="primary">hemA</name>
    <name type="ordered locus">DSY2226</name>
</gene>
<comment type="function">
    <text evidence="1">Catalyzes the NADPH-dependent reduction of glutamyl-tRNA(Glu) to glutamate 1-semialdehyde (GSA).</text>
</comment>
<comment type="catalytic activity">
    <reaction evidence="1">
        <text>(S)-4-amino-5-oxopentanoate + tRNA(Glu) + NADP(+) = L-glutamyl-tRNA(Glu) + NADPH + H(+)</text>
        <dbReference type="Rhea" id="RHEA:12344"/>
        <dbReference type="Rhea" id="RHEA-COMP:9663"/>
        <dbReference type="Rhea" id="RHEA-COMP:9680"/>
        <dbReference type="ChEBI" id="CHEBI:15378"/>
        <dbReference type="ChEBI" id="CHEBI:57501"/>
        <dbReference type="ChEBI" id="CHEBI:57783"/>
        <dbReference type="ChEBI" id="CHEBI:58349"/>
        <dbReference type="ChEBI" id="CHEBI:78442"/>
        <dbReference type="ChEBI" id="CHEBI:78520"/>
        <dbReference type="EC" id="1.2.1.70"/>
    </reaction>
</comment>
<comment type="pathway">
    <text evidence="1">Porphyrin-containing compound metabolism; protoporphyrin-IX biosynthesis; 5-aminolevulinate from L-glutamyl-tRNA(Glu): step 1/2.</text>
</comment>
<comment type="subunit">
    <text evidence="1">Homodimer.</text>
</comment>
<comment type="domain">
    <text evidence="1">Possesses an unusual extended V-shaped dimeric structure with each monomer consisting of three distinct domains arranged along a curved 'spinal' alpha-helix. The N-terminal catalytic domain specifically recognizes the glutamate moiety of the substrate. The second domain is the NADPH-binding domain, and the third C-terminal domain is responsible for dimerization.</text>
</comment>
<comment type="miscellaneous">
    <text evidence="1">During catalysis, the active site Cys acts as a nucleophile attacking the alpha-carbonyl group of tRNA-bound glutamate with the formation of a thioester intermediate between enzyme and glutamate, and the concomitant release of tRNA(Glu). The thioester intermediate is finally reduced by direct hydride transfer from NADPH, to form the product GSA.</text>
</comment>
<comment type="similarity">
    <text evidence="1">Belongs to the glutamyl-tRNA reductase family.</text>
</comment>
<accession>Q24VC7</accession>
<reference key="1">
    <citation type="journal article" date="2006" name="J. Bacteriol.">
        <title>Complete genome sequence of the dehalorespiring bacterium Desulfitobacterium hafniense Y51 and comparison with Dehalococcoides ethenogenes 195.</title>
        <authorList>
            <person name="Nonaka H."/>
            <person name="Keresztes G."/>
            <person name="Shinoda Y."/>
            <person name="Ikenaga Y."/>
            <person name="Abe M."/>
            <person name="Naito K."/>
            <person name="Inatomi K."/>
            <person name="Furukawa K."/>
            <person name="Inui M."/>
            <person name="Yukawa H."/>
        </authorList>
    </citation>
    <scope>NUCLEOTIDE SEQUENCE [LARGE SCALE GENOMIC DNA]</scope>
    <source>
        <strain>Y51</strain>
    </source>
</reference>
<name>HEM1_DESHY</name>
<evidence type="ECO:0000255" key="1">
    <source>
        <dbReference type="HAMAP-Rule" id="MF_00087"/>
    </source>
</evidence>
<dbReference type="EC" id="1.2.1.70" evidence="1"/>
<dbReference type="EMBL" id="AP008230">
    <property type="protein sequence ID" value="BAE84015.1"/>
    <property type="molecule type" value="Genomic_DNA"/>
</dbReference>
<dbReference type="RefSeq" id="WP_011460182.1">
    <property type="nucleotide sequence ID" value="NC_007907.1"/>
</dbReference>
<dbReference type="SMR" id="Q24VC7"/>
<dbReference type="STRING" id="138119.DSY2226"/>
<dbReference type="KEGG" id="dsy:DSY2226"/>
<dbReference type="eggNOG" id="COG0373">
    <property type="taxonomic scope" value="Bacteria"/>
</dbReference>
<dbReference type="HOGENOM" id="CLU_035113_2_2_9"/>
<dbReference type="UniPathway" id="UPA00251">
    <property type="reaction ID" value="UER00316"/>
</dbReference>
<dbReference type="Proteomes" id="UP000001946">
    <property type="component" value="Chromosome"/>
</dbReference>
<dbReference type="GO" id="GO:0008883">
    <property type="term" value="F:glutamyl-tRNA reductase activity"/>
    <property type="evidence" value="ECO:0007669"/>
    <property type="project" value="UniProtKB-UniRule"/>
</dbReference>
<dbReference type="GO" id="GO:0050661">
    <property type="term" value="F:NADP binding"/>
    <property type="evidence" value="ECO:0007669"/>
    <property type="project" value="InterPro"/>
</dbReference>
<dbReference type="GO" id="GO:0019353">
    <property type="term" value="P:protoporphyrinogen IX biosynthetic process from glutamate"/>
    <property type="evidence" value="ECO:0007669"/>
    <property type="project" value="TreeGrafter"/>
</dbReference>
<dbReference type="CDD" id="cd05213">
    <property type="entry name" value="NAD_bind_Glutamyl_tRNA_reduct"/>
    <property type="match status" value="1"/>
</dbReference>
<dbReference type="FunFam" id="3.30.460.30:FF:000001">
    <property type="entry name" value="Glutamyl-tRNA reductase"/>
    <property type="match status" value="1"/>
</dbReference>
<dbReference type="FunFam" id="3.40.50.720:FF:000031">
    <property type="entry name" value="Glutamyl-tRNA reductase"/>
    <property type="match status" value="1"/>
</dbReference>
<dbReference type="Gene3D" id="3.30.460.30">
    <property type="entry name" value="Glutamyl-tRNA reductase, N-terminal domain"/>
    <property type="match status" value="1"/>
</dbReference>
<dbReference type="Gene3D" id="3.40.50.720">
    <property type="entry name" value="NAD(P)-binding Rossmann-like Domain"/>
    <property type="match status" value="1"/>
</dbReference>
<dbReference type="HAMAP" id="MF_00087">
    <property type="entry name" value="Glu_tRNA_reductase"/>
    <property type="match status" value="1"/>
</dbReference>
<dbReference type="InterPro" id="IPR000343">
    <property type="entry name" value="4pyrrol_synth_GluRdtase"/>
</dbReference>
<dbReference type="InterPro" id="IPR015896">
    <property type="entry name" value="4pyrrol_synth_GluRdtase_dimer"/>
</dbReference>
<dbReference type="InterPro" id="IPR015895">
    <property type="entry name" value="4pyrrol_synth_GluRdtase_N"/>
</dbReference>
<dbReference type="InterPro" id="IPR036453">
    <property type="entry name" value="GluRdtase_dimer_dom_sf"/>
</dbReference>
<dbReference type="InterPro" id="IPR036343">
    <property type="entry name" value="GluRdtase_N_sf"/>
</dbReference>
<dbReference type="InterPro" id="IPR036291">
    <property type="entry name" value="NAD(P)-bd_dom_sf"/>
</dbReference>
<dbReference type="InterPro" id="IPR006151">
    <property type="entry name" value="Shikm_DH/Glu-tRNA_Rdtase"/>
</dbReference>
<dbReference type="NCBIfam" id="TIGR01035">
    <property type="entry name" value="hemA"/>
    <property type="match status" value="1"/>
</dbReference>
<dbReference type="NCBIfam" id="NF000744">
    <property type="entry name" value="PRK00045.1-3"/>
    <property type="match status" value="1"/>
</dbReference>
<dbReference type="PANTHER" id="PTHR43013">
    <property type="entry name" value="GLUTAMYL-TRNA REDUCTASE"/>
    <property type="match status" value="1"/>
</dbReference>
<dbReference type="PANTHER" id="PTHR43013:SF1">
    <property type="entry name" value="GLUTAMYL-TRNA REDUCTASE"/>
    <property type="match status" value="1"/>
</dbReference>
<dbReference type="Pfam" id="PF00745">
    <property type="entry name" value="GlutR_dimer"/>
    <property type="match status" value="1"/>
</dbReference>
<dbReference type="Pfam" id="PF05201">
    <property type="entry name" value="GlutR_N"/>
    <property type="match status" value="1"/>
</dbReference>
<dbReference type="Pfam" id="PF01488">
    <property type="entry name" value="Shikimate_DH"/>
    <property type="match status" value="1"/>
</dbReference>
<dbReference type="PIRSF" id="PIRSF000445">
    <property type="entry name" value="4pyrrol_synth_GluRdtase"/>
    <property type="match status" value="1"/>
</dbReference>
<dbReference type="SUPFAM" id="SSF69742">
    <property type="entry name" value="Glutamyl tRNA-reductase catalytic, N-terminal domain"/>
    <property type="match status" value="1"/>
</dbReference>
<dbReference type="SUPFAM" id="SSF69075">
    <property type="entry name" value="Glutamyl tRNA-reductase dimerization domain"/>
    <property type="match status" value="1"/>
</dbReference>
<dbReference type="SUPFAM" id="SSF51735">
    <property type="entry name" value="NAD(P)-binding Rossmann-fold domains"/>
    <property type="match status" value="1"/>
</dbReference>
<feature type="chain" id="PRO_1000004617" description="Glutamyl-tRNA reductase">
    <location>
        <begin position="1"/>
        <end position="443"/>
    </location>
</feature>
<feature type="active site" description="Nucleophile" evidence="1">
    <location>
        <position position="50"/>
    </location>
</feature>
<feature type="binding site" evidence="1">
    <location>
        <begin position="49"/>
        <end position="52"/>
    </location>
    <ligand>
        <name>substrate</name>
    </ligand>
</feature>
<feature type="binding site" evidence="1">
    <location>
        <position position="109"/>
    </location>
    <ligand>
        <name>substrate</name>
    </ligand>
</feature>
<feature type="binding site" evidence="1">
    <location>
        <begin position="114"/>
        <end position="116"/>
    </location>
    <ligand>
        <name>substrate</name>
    </ligand>
</feature>
<feature type="binding site" evidence="1">
    <location>
        <position position="120"/>
    </location>
    <ligand>
        <name>substrate</name>
    </ligand>
</feature>
<feature type="binding site" evidence="1">
    <location>
        <begin position="189"/>
        <end position="194"/>
    </location>
    <ligand>
        <name>NADP(+)</name>
        <dbReference type="ChEBI" id="CHEBI:58349"/>
    </ligand>
</feature>
<feature type="site" description="Important for activity" evidence="1">
    <location>
        <position position="99"/>
    </location>
</feature>
<organism>
    <name type="scientific">Desulfitobacterium hafniense (strain Y51)</name>
    <dbReference type="NCBI Taxonomy" id="138119"/>
    <lineage>
        <taxon>Bacteria</taxon>
        <taxon>Bacillati</taxon>
        <taxon>Bacillota</taxon>
        <taxon>Clostridia</taxon>
        <taxon>Eubacteriales</taxon>
        <taxon>Desulfitobacteriaceae</taxon>
        <taxon>Desulfitobacterium</taxon>
    </lineage>
</organism>
<keyword id="KW-0521">NADP</keyword>
<keyword id="KW-0560">Oxidoreductase</keyword>
<keyword id="KW-0627">Porphyrin biosynthesis</keyword>
<keyword id="KW-1185">Reference proteome</keyword>
<sequence>MFPITIGLNHKTAPVEIREKVSFHPSEINKALMELNELSALNGIVLLSTCNRLEIYAATPEVELGVSVIKKFLARHGKLREEDINQYLYVHTLYDSVRHLFRVVAGLDSMVMGETQILGQVAEAYEKSSQLNLSNKIIHAIFQNALAVGKRVRSETQIDQHPTSVSYTAVELAKQTFGDVQGKSILILGAGEMSALTAKHLVASGADTVLVSNRSMQRAQALAEEFSGRAIPYEELDTALAEADIVISATAAAHFVIKPERMRRVMEQRRQRALLLIDIAVPRDIHPNVGELEGVTLFDIDDLRGVVDSHQKAREEAALQAGRILEEEMGRFVKWHNSLYVVPTIVALQRRGEEVREIMLKSALNKLGPIDEKQEKIIRSMANSIVTHLLHAPIANLKEAANTSQGHLYTEILQNLFDLDGNELSPHAGWSVHHAASHHSNQG</sequence>
<proteinExistence type="inferred from homology"/>